<feature type="chain" id="PRO_1000073169" description="Putative N-acetylmannosamine-6-phosphate 2-epimerase">
    <location>
        <begin position="1"/>
        <end position="222"/>
    </location>
</feature>
<evidence type="ECO:0000255" key="1">
    <source>
        <dbReference type="HAMAP-Rule" id="MF_01235"/>
    </source>
</evidence>
<comment type="function">
    <text evidence="1">Converts N-acetylmannosamine-6-phosphate (ManNAc-6-P) to N-acetylglucosamine-6-phosphate (GlcNAc-6-P).</text>
</comment>
<comment type="catalytic activity">
    <reaction evidence="1">
        <text>an N-acyl-D-glucosamine 6-phosphate = an N-acyl-D-mannosamine 6-phosphate</text>
        <dbReference type="Rhea" id="RHEA:23932"/>
        <dbReference type="ChEBI" id="CHEBI:57599"/>
        <dbReference type="ChEBI" id="CHEBI:57666"/>
        <dbReference type="EC" id="5.1.3.9"/>
    </reaction>
</comment>
<comment type="pathway">
    <text evidence="1">Amino-sugar metabolism; N-acetylneuraminate degradation; D-fructose 6-phosphate from N-acetylneuraminate: step 3/5.</text>
</comment>
<comment type="similarity">
    <text evidence="1">Belongs to the NanE family.</text>
</comment>
<proteinExistence type="inferred from homology"/>
<sequence>MLPHGLIVSCQALPDEPLHSSFIMSKMALAAYEGGAVGIRANTKEDILAIKETVDLPVIGIVKRDYDHSDVFITATSKEVDELIESQCEVIALDATLQQRPKETLDELVSYIRTHAPNVEIMADIATVEEAKNAARLGFDYIGTTLHGYTSYTQGQLLYQNDFQFLKDVLQSVDAKVIAEGNVITPDMYKRVMDLGVHCSVVGGAITRPKEITKRFVQIMED</sequence>
<protein>
    <recommendedName>
        <fullName evidence="1">Putative N-acetylmannosamine-6-phosphate 2-epimerase</fullName>
        <ecNumber evidence="1">5.1.3.9</ecNumber>
    </recommendedName>
    <alternativeName>
        <fullName evidence="1">ManNAc-6-P epimerase</fullName>
    </alternativeName>
</protein>
<accession>A6QDV0</accession>
<organism>
    <name type="scientific">Staphylococcus aureus (strain Newman)</name>
    <dbReference type="NCBI Taxonomy" id="426430"/>
    <lineage>
        <taxon>Bacteria</taxon>
        <taxon>Bacillati</taxon>
        <taxon>Bacillota</taxon>
        <taxon>Bacilli</taxon>
        <taxon>Bacillales</taxon>
        <taxon>Staphylococcaceae</taxon>
        <taxon>Staphylococcus</taxon>
    </lineage>
</organism>
<gene>
    <name evidence="1" type="primary">nanE</name>
    <name type="ordered locus">NWMN_0260</name>
</gene>
<keyword id="KW-0119">Carbohydrate metabolism</keyword>
<keyword id="KW-0413">Isomerase</keyword>
<name>NANE_STAAE</name>
<dbReference type="EC" id="5.1.3.9" evidence="1"/>
<dbReference type="EMBL" id="AP009351">
    <property type="protein sequence ID" value="BAF66532.1"/>
    <property type="molecule type" value="Genomic_DNA"/>
</dbReference>
<dbReference type="RefSeq" id="WP_000936720.1">
    <property type="nucleotide sequence ID" value="NZ_JBBIAE010000003.1"/>
</dbReference>
<dbReference type="SMR" id="A6QDV0"/>
<dbReference type="KEGG" id="sae:NWMN_0260"/>
<dbReference type="HOGENOM" id="CLU_086300_1_0_9"/>
<dbReference type="UniPathway" id="UPA00629">
    <property type="reaction ID" value="UER00682"/>
</dbReference>
<dbReference type="Proteomes" id="UP000006386">
    <property type="component" value="Chromosome"/>
</dbReference>
<dbReference type="GO" id="GO:0005829">
    <property type="term" value="C:cytosol"/>
    <property type="evidence" value="ECO:0007669"/>
    <property type="project" value="TreeGrafter"/>
</dbReference>
<dbReference type="GO" id="GO:0047465">
    <property type="term" value="F:N-acylglucosamine-6-phosphate 2-epimerase activity"/>
    <property type="evidence" value="ECO:0007669"/>
    <property type="project" value="UniProtKB-EC"/>
</dbReference>
<dbReference type="GO" id="GO:0005975">
    <property type="term" value="P:carbohydrate metabolic process"/>
    <property type="evidence" value="ECO:0007669"/>
    <property type="project" value="UniProtKB-UniRule"/>
</dbReference>
<dbReference type="GO" id="GO:0006053">
    <property type="term" value="P:N-acetylmannosamine catabolic process"/>
    <property type="evidence" value="ECO:0007669"/>
    <property type="project" value="TreeGrafter"/>
</dbReference>
<dbReference type="GO" id="GO:0019262">
    <property type="term" value="P:N-acetylneuraminate catabolic process"/>
    <property type="evidence" value="ECO:0007669"/>
    <property type="project" value="UniProtKB-UniRule"/>
</dbReference>
<dbReference type="CDD" id="cd04729">
    <property type="entry name" value="NanE"/>
    <property type="match status" value="1"/>
</dbReference>
<dbReference type="FunFam" id="3.20.20.70:FF:000035">
    <property type="entry name" value="Putative N-acetylmannosamine-6-phosphate 2-epimerase"/>
    <property type="match status" value="1"/>
</dbReference>
<dbReference type="Gene3D" id="3.20.20.70">
    <property type="entry name" value="Aldolase class I"/>
    <property type="match status" value="1"/>
</dbReference>
<dbReference type="HAMAP" id="MF_01235">
    <property type="entry name" value="ManNAc6P_epimer"/>
    <property type="match status" value="1"/>
</dbReference>
<dbReference type="InterPro" id="IPR013785">
    <property type="entry name" value="Aldolase_TIM"/>
</dbReference>
<dbReference type="InterPro" id="IPR007260">
    <property type="entry name" value="NanE"/>
</dbReference>
<dbReference type="InterPro" id="IPR011060">
    <property type="entry name" value="RibuloseP-bd_barrel"/>
</dbReference>
<dbReference type="NCBIfam" id="NF002231">
    <property type="entry name" value="PRK01130.1"/>
    <property type="match status" value="1"/>
</dbReference>
<dbReference type="PANTHER" id="PTHR36204">
    <property type="entry name" value="N-ACETYLMANNOSAMINE-6-PHOSPHATE 2-EPIMERASE-RELATED"/>
    <property type="match status" value="1"/>
</dbReference>
<dbReference type="PANTHER" id="PTHR36204:SF1">
    <property type="entry name" value="N-ACETYLMANNOSAMINE-6-PHOSPHATE 2-EPIMERASE-RELATED"/>
    <property type="match status" value="1"/>
</dbReference>
<dbReference type="Pfam" id="PF04131">
    <property type="entry name" value="NanE"/>
    <property type="match status" value="1"/>
</dbReference>
<dbReference type="SUPFAM" id="SSF51366">
    <property type="entry name" value="Ribulose-phoshate binding barrel"/>
    <property type="match status" value="1"/>
</dbReference>
<reference key="1">
    <citation type="journal article" date="2008" name="J. Bacteriol.">
        <title>Genome sequence of Staphylococcus aureus strain Newman and comparative analysis of staphylococcal genomes: polymorphism and evolution of two major pathogenicity islands.</title>
        <authorList>
            <person name="Baba T."/>
            <person name="Bae T."/>
            <person name="Schneewind O."/>
            <person name="Takeuchi F."/>
            <person name="Hiramatsu K."/>
        </authorList>
    </citation>
    <scope>NUCLEOTIDE SEQUENCE [LARGE SCALE GENOMIC DNA]</scope>
    <source>
        <strain>Newman</strain>
    </source>
</reference>